<evidence type="ECO:0000255" key="1">
    <source>
        <dbReference type="HAMAP-Rule" id="MF_00120"/>
    </source>
</evidence>
<organism>
    <name type="scientific">Caulobacter sp. (strain K31)</name>
    <dbReference type="NCBI Taxonomy" id="366602"/>
    <lineage>
        <taxon>Bacteria</taxon>
        <taxon>Pseudomonadati</taxon>
        <taxon>Pseudomonadota</taxon>
        <taxon>Alphaproteobacteria</taxon>
        <taxon>Caulobacterales</taxon>
        <taxon>Caulobacteraceae</taxon>
        <taxon>Caulobacter</taxon>
    </lineage>
</organism>
<sequence>MSSLTSLTLKGALDGLEKGDFTSVELTRAHIDAIEAARGLNAFLLETPEQALSMAAASDARRALDAARPLDGIPLGIKDLFCTQGVRTTAASKILEPFVPQYESTVTSQLWRDGAVMLGKLNLDEFAMGSSNETSAYGPVVNPWRKAGSNQALTPGGSSGGSAAAVAADLCLGATATDTGGSIRQPAAFTGTVGIKPTYGRCSRWGVVAFASSLDQAGPIAKTVTDAALLLTSMSGHDPKDSTSLDVPVPDFSAFVGKSIKGLRIGVPQEYRVDGMPAEIEKLWADGIAWLKDAGCEIVEISLPHTKYALPAYYIVAPAEASSNLARYDGMRYGLRAEGSNLTEVYENTRAEGFGDEVKRRILIGTYVLSAGYYDAYYLKALKVRRRIAEDFDNAWERCDAILTPTAPSAAFGLGENSSDPIAMYLNDVFTVTTNLAGLPGLSLPAGLDANGLPLGLQIIGKPLDEGTVFSVAGVLEKAAGFTAKATKWW</sequence>
<protein>
    <recommendedName>
        <fullName evidence="1">Glutamyl-tRNA(Gln) amidotransferase subunit A</fullName>
        <shortName evidence="1">Glu-ADT subunit A</shortName>
        <ecNumber evidence="1">6.3.5.7</ecNumber>
    </recommendedName>
</protein>
<gene>
    <name evidence="1" type="primary">gatA</name>
    <name type="ordered locus">Caul_1520</name>
</gene>
<dbReference type="EC" id="6.3.5.7" evidence="1"/>
<dbReference type="EMBL" id="CP000927">
    <property type="protein sequence ID" value="ABZ70650.1"/>
    <property type="molecule type" value="Genomic_DNA"/>
</dbReference>
<dbReference type="SMR" id="B0T193"/>
<dbReference type="STRING" id="366602.Caul_1520"/>
<dbReference type="KEGG" id="cak:Caul_1520"/>
<dbReference type="eggNOG" id="COG0154">
    <property type="taxonomic scope" value="Bacteria"/>
</dbReference>
<dbReference type="HOGENOM" id="CLU_009600_0_3_5"/>
<dbReference type="OrthoDB" id="9811471at2"/>
<dbReference type="GO" id="GO:0030956">
    <property type="term" value="C:glutamyl-tRNA(Gln) amidotransferase complex"/>
    <property type="evidence" value="ECO:0007669"/>
    <property type="project" value="InterPro"/>
</dbReference>
<dbReference type="GO" id="GO:0005524">
    <property type="term" value="F:ATP binding"/>
    <property type="evidence" value="ECO:0007669"/>
    <property type="project" value="UniProtKB-KW"/>
</dbReference>
<dbReference type="GO" id="GO:0050567">
    <property type="term" value="F:glutaminyl-tRNA synthase (glutamine-hydrolyzing) activity"/>
    <property type="evidence" value="ECO:0007669"/>
    <property type="project" value="UniProtKB-UniRule"/>
</dbReference>
<dbReference type="GO" id="GO:0006412">
    <property type="term" value="P:translation"/>
    <property type="evidence" value="ECO:0007669"/>
    <property type="project" value="UniProtKB-UniRule"/>
</dbReference>
<dbReference type="Gene3D" id="3.90.1300.10">
    <property type="entry name" value="Amidase signature (AS) domain"/>
    <property type="match status" value="1"/>
</dbReference>
<dbReference type="HAMAP" id="MF_00120">
    <property type="entry name" value="GatA"/>
    <property type="match status" value="1"/>
</dbReference>
<dbReference type="InterPro" id="IPR000120">
    <property type="entry name" value="Amidase"/>
</dbReference>
<dbReference type="InterPro" id="IPR020556">
    <property type="entry name" value="Amidase_CS"/>
</dbReference>
<dbReference type="InterPro" id="IPR023631">
    <property type="entry name" value="Amidase_dom"/>
</dbReference>
<dbReference type="InterPro" id="IPR036928">
    <property type="entry name" value="AS_sf"/>
</dbReference>
<dbReference type="InterPro" id="IPR004412">
    <property type="entry name" value="GatA"/>
</dbReference>
<dbReference type="NCBIfam" id="TIGR00132">
    <property type="entry name" value="gatA"/>
    <property type="match status" value="1"/>
</dbReference>
<dbReference type="PANTHER" id="PTHR11895:SF151">
    <property type="entry name" value="GLUTAMYL-TRNA(GLN) AMIDOTRANSFERASE SUBUNIT A"/>
    <property type="match status" value="1"/>
</dbReference>
<dbReference type="PANTHER" id="PTHR11895">
    <property type="entry name" value="TRANSAMIDASE"/>
    <property type="match status" value="1"/>
</dbReference>
<dbReference type="Pfam" id="PF01425">
    <property type="entry name" value="Amidase"/>
    <property type="match status" value="1"/>
</dbReference>
<dbReference type="SUPFAM" id="SSF75304">
    <property type="entry name" value="Amidase signature (AS) enzymes"/>
    <property type="match status" value="1"/>
</dbReference>
<dbReference type="PROSITE" id="PS00571">
    <property type="entry name" value="AMIDASES"/>
    <property type="match status" value="1"/>
</dbReference>
<feature type="chain" id="PRO_1000076124" description="Glutamyl-tRNA(Gln) amidotransferase subunit A">
    <location>
        <begin position="1"/>
        <end position="490"/>
    </location>
</feature>
<feature type="active site" description="Charge relay system" evidence="1">
    <location>
        <position position="78"/>
    </location>
</feature>
<feature type="active site" description="Charge relay system" evidence="1">
    <location>
        <position position="158"/>
    </location>
</feature>
<feature type="active site" description="Acyl-ester intermediate" evidence="1">
    <location>
        <position position="182"/>
    </location>
</feature>
<reference key="1">
    <citation type="submission" date="2008-01" db="EMBL/GenBank/DDBJ databases">
        <title>Complete sequence of chromosome of Caulobacter sp. K31.</title>
        <authorList>
            <consortium name="US DOE Joint Genome Institute"/>
            <person name="Copeland A."/>
            <person name="Lucas S."/>
            <person name="Lapidus A."/>
            <person name="Barry K."/>
            <person name="Glavina del Rio T."/>
            <person name="Dalin E."/>
            <person name="Tice H."/>
            <person name="Pitluck S."/>
            <person name="Bruce D."/>
            <person name="Goodwin L."/>
            <person name="Thompson L.S."/>
            <person name="Brettin T."/>
            <person name="Detter J.C."/>
            <person name="Han C."/>
            <person name="Schmutz J."/>
            <person name="Larimer F."/>
            <person name="Land M."/>
            <person name="Hauser L."/>
            <person name="Kyrpides N."/>
            <person name="Kim E."/>
            <person name="Stephens C."/>
            <person name="Richardson P."/>
        </authorList>
    </citation>
    <scope>NUCLEOTIDE SEQUENCE [LARGE SCALE GENOMIC DNA]</scope>
    <source>
        <strain>K31</strain>
    </source>
</reference>
<name>GATA_CAUSK</name>
<comment type="function">
    <text evidence="1">Allows the formation of correctly charged Gln-tRNA(Gln) through the transamidation of misacylated Glu-tRNA(Gln) in organisms which lack glutaminyl-tRNA synthetase. The reaction takes place in the presence of glutamine and ATP through an activated gamma-phospho-Glu-tRNA(Gln).</text>
</comment>
<comment type="catalytic activity">
    <reaction evidence="1">
        <text>L-glutamyl-tRNA(Gln) + L-glutamine + ATP + H2O = L-glutaminyl-tRNA(Gln) + L-glutamate + ADP + phosphate + H(+)</text>
        <dbReference type="Rhea" id="RHEA:17521"/>
        <dbReference type="Rhea" id="RHEA-COMP:9681"/>
        <dbReference type="Rhea" id="RHEA-COMP:9684"/>
        <dbReference type="ChEBI" id="CHEBI:15377"/>
        <dbReference type="ChEBI" id="CHEBI:15378"/>
        <dbReference type="ChEBI" id="CHEBI:29985"/>
        <dbReference type="ChEBI" id="CHEBI:30616"/>
        <dbReference type="ChEBI" id="CHEBI:43474"/>
        <dbReference type="ChEBI" id="CHEBI:58359"/>
        <dbReference type="ChEBI" id="CHEBI:78520"/>
        <dbReference type="ChEBI" id="CHEBI:78521"/>
        <dbReference type="ChEBI" id="CHEBI:456216"/>
        <dbReference type="EC" id="6.3.5.7"/>
    </reaction>
</comment>
<comment type="subunit">
    <text evidence="1">Heterotrimer of A, B and C subunits.</text>
</comment>
<comment type="similarity">
    <text evidence="1">Belongs to the amidase family. GatA subfamily.</text>
</comment>
<accession>B0T193</accession>
<proteinExistence type="inferred from homology"/>
<keyword id="KW-0067">ATP-binding</keyword>
<keyword id="KW-0436">Ligase</keyword>
<keyword id="KW-0547">Nucleotide-binding</keyword>
<keyword id="KW-0648">Protein biosynthesis</keyword>